<evidence type="ECO:0000250" key="1"/>
<evidence type="ECO:0000250" key="2">
    <source>
        <dbReference type="UniProtKB" id="G2QNH0"/>
    </source>
</evidence>
<evidence type="ECO:0000250" key="3">
    <source>
        <dbReference type="UniProtKB" id="P02722"/>
    </source>
</evidence>
<evidence type="ECO:0000250" key="4">
    <source>
        <dbReference type="UniProtKB" id="P05141"/>
    </source>
</evidence>
<evidence type="ECO:0000250" key="5">
    <source>
        <dbReference type="UniProtKB" id="P12235"/>
    </source>
</evidence>
<evidence type="ECO:0000250" key="6">
    <source>
        <dbReference type="UniProtKB" id="P51881"/>
    </source>
</evidence>
<evidence type="ECO:0000250" key="7">
    <source>
        <dbReference type="UniProtKB" id="Q09073"/>
    </source>
</evidence>
<evidence type="ECO:0000255" key="8"/>
<evidence type="ECO:0000303" key="9">
    <source ref="1"/>
</evidence>
<evidence type="ECO:0000305" key="10"/>
<accession>Q000K2</accession>
<protein>
    <recommendedName>
        <fullName evidence="10">ADP/ATP translocase 2</fullName>
    </recommendedName>
    <alternativeName>
        <fullName evidence="4">ADP,ATP carrier protein 2</fullName>
    </alternativeName>
    <alternativeName>
        <fullName evidence="4">Adenine nucleotide translocator 2</fullName>
        <shortName evidence="9">ANT 2</shortName>
    </alternativeName>
    <alternativeName>
        <fullName evidence="10">Solute carrier family 25 member 5</fullName>
    </alternativeName>
    <component>
        <recommendedName>
            <fullName>ADP/ATP translocase 2, N-terminally processed</fullName>
        </recommendedName>
    </component>
</protein>
<dbReference type="EMBL" id="DQ987710">
    <property type="protein sequence ID" value="ABJ90459.1"/>
    <property type="molecule type" value="mRNA"/>
</dbReference>
<dbReference type="SMR" id="Q000K2"/>
<dbReference type="GO" id="GO:0005743">
    <property type="term" value="C:mitochondrial inner membrane"/>
    <property type="evidence" value="ECO:0007669"/>
    <property type="project" value="UniProtKB-SubCell"/>
</dbReference>
<dbReference type="GO" id="GO:0005757">
    <property type="term" value="C:mitochondrial permeability transition pore complex"/>
    <property type="evidence" value="ECO:0000250"/>
    <property type="project" value="UniProtKB"/>
</dbReference>
<dbReference type="GO" id="GO:0071817">
    <property type="term" value="C:MMXD complex"/>
    <property type="evidence" value="ECO:0000250"/>
    <property type="project" value="UniProtKB"/>
</dbReference>
<dbReference type="GO" id="GO:0005471">
    <property type="term" value="F:ATP:ADP antiporter activity"/>
    <property type="evidence" value="ECO:0000250"/>
    <property type="project" value="UniProtKB"/>
</dbReference>
<dbReference type="GO" id="GO:0017077">
    <property type="term" value="F:oxidative phosphorylation uncoupler activity"/>
    <property type="evidence" value="ECO:0000250"/>
    <property type="project" value="UniProtKB"/>
</dbReference>
<dbReference type="GO" id="GO:1990845">
    <property type="term" value="P:adaptive thermogenesis"/>
    <property type="evidence" value="ECO:0000250"/>
    <property type="project" value="UniProtKB"/>
</dbReference>
<dbReference type="GO" id="GO:0030183">
    <property type="term" value="P:B cell differentiation"/>
    <property type="evidence" value="ECO:0000250"/>
    <property type="project" value="UniProtKB"/>
</dbReference>
<dbReference type="GO" id="GO:0007059">
    <property type="term" value="P:chromosome segregation"/>
    <property type="evidence" value="ECO:0007669"/>
    <property type="project" value="UniProtKB-KW"/>
</dbReference>
<dbReference type="GO" id="GO:0030218">
    <property type="term" value="P:erythrocyte differentiation"/>
    <property type="evidence" value="ECO:0000250"/>
    <property type="project" value="UniProtKB"/>
</dbReference>
<dbReference type="GO" id="GO:0140021">
    <property type="term" value="P:mitochondrial ADP transmembrane transport"/>
    <property type="evidence" value="ECO:0000250"/>
    <property type="project" value="UniProtKB"/>
</dbReference>
<dbReference type="GO" id="GO:1990544">
    <property type="term" value="P:mitochondrial ATP transmembrane transport"/>
    <property type="evidence" value="ECO:0000250"/>
    <property type="project" value="UniProtKB"/>
</dbReference>
<dbReference type="GO" id="GO:1901029">
    <property type="term" value="P:negative regulation of mitochondrial outer membrane permeabilization involved in apoptotic signaling pathway"/>
    <property type="evidence" value="ECO:0000250"/>
    <property type="project" value="UniProtKB"/>
</dbReference>
<dbReference type="GO" id="GO:0008284">
    <property type="term" value="P:positive regulation of cell population proliferation"/>
    <property type="evidence" value="ECO:0000250"/>
    <property type="project" value="UniProtKB"/>
</dbReference>
<dbReference type="GO" id="GO:1901526">
    <property type="term" value="P:positive regulation of mitophagy"/>
    <property type="evidence" value="ECO:0000250"/>
    <property type="project" value="UniProtKB"/>
</dbReference>
<dbReference type="GO" id="GO:0046902">
    <property type="term" value="P:regulation of mitochondrial membrane permeability"/>
    <property type="evidence" value="ECO:0000250"/>
    <property type="project" value="UniProtKB"/>
</dbReference>
<dbReference type="FunFam" id="1.50.40.10:FF:000002">
    <property type="entry name" value="Putative ADP/ATP translocase 2-like"/>
    <property type="match status" value="1"/>
</dbReference>
<dbReference type="Gene3D" id="1.50.40.10">
    <property type="entry name" value="Mitochondrial carrier domain"/>
    <property type="match status" value="1"/>
</dbReference>
<dbReference type="InterPro" id="IPR002113">
    <property type="entry name" value="ADT_euk_type"/>
</dbReference>
<dbReference type="InterPro" id="IPR002067">
    <property type="entry name" value="Mit_carrier"/>
</dbReference>
<dbReference type="InterPro" id="IPR018108">
    <property type="entry name" value="Mitochondrial_sb/sol_carrier"/>
</dbReference>
<dbReference type="InterPro" id="IPR023395">
    <property type="entry name" value="Mt_carrier_dom_sf"/>
</dbReference>
<dbReference type="PANTHER" id="PTHR45635">
    <property type="entry name" value="ADP,ATP CARRIER PROTEIN 1-RELATED-RELATED"/>
    <property type="match status" value="1"/>
</dbReference>
<dbReference type="PANTHER" id="PTHR45635:SF3">
    <property type="entry name" value="ADP_ATP TRANSLOCASE 2"/>
    <property type="match status" value="1"/>
</dbReference>
<dbReference type="Pfam" id="PF00153">
    <property type="entry name" value="Mito_carr"/>
    <property type="match status" value="3"/>
</dbReference>
<dbReference type="PRINTS" id="PR00927">
    <property type="entry name" value="ADPTRNSLCASE"/>
</dbReference>
<dbReference type="PRINTS" id="PR00926">
    <property type="entry name" value="MITOCARRIER"/>
</dbReference>
<dbReference type="SUPFAM" id="SSF103506">
    <property type="entry name" value="Mitochondrial carrier"/>
    <property type="match status" value="1"/>
</dbReference>
<dbReference type="PROSITE" id="PS50920">
    <property type="entry name" value="SOLCAR"/>
    <property type="match status" value="3"/>
</dbReference>
<organism>
    <name type="scientific">Tachyglossus aculeatus aculeatus</name>
    <name type="common">Southeast Australian short-beaked echidna</name>
    <dbReference type="NCBI Taxonomy" id="49271"/>
    <lineage>
        <taxon>Eukaryota</taxon>
        <taxon>Metazoa</taxon>
        <taxon>Chordata</taxon>
        <taxon>Craniata</taxon>
        <taxon>Vertebrata</taxon>
        <taxon>Euteleostomi</taxon>
        <taxon>Mammalia</taxon>
        <taxon>Monotremata</taxon>
        <taxon>Tachyglossidae</taxon>
        <taxon>Tachyglossus</taxon>
    </lineage>
</organism>
<proteinExistence type="evidence at transcript level"/>
<keyword id="KW-0007">Acetylation</keyword>
<keyword id="KW-0050">Antiport</keyword>
<keyword id="KW-0159">Chromosome partition</keyword>
<keyword id="KW-0472">Membrane</keyword>
<keyword id="KW-0488">Methylation</keyword>
<keyword id="KW-0496">Mitochondrion</keyword>
<keyword id="KW-0999">Mitochondrion inner membrane</keyword>
<keyword id="KW-0597">Phosphoprotein</keyword>
<keyword id="KW-0677">Repeat</keyword>
<keyword id="KW-0812">Transmembrane</keyword>
<keyword id="KW-1133">Transmembrane helix</keyword>
<keyword id="KW-0813">Transport</keyword>
<gene>
    <name evidence="4" type="primary">SLC25A5</name>
</gene>
<name>ADT2_TACAC</name>
<feature type="chain" id="PRO_0000423224" description="ADP/ATP translocase 2">
    <location>
        <begin position="1"/>
        <end position="298"/>
    </location>
</feature>
<feature type="initiator methionine" description="Removed; alternate" evidence="4">
    <location>
        <position position="1"/>
    </location>
</feature>
<feature type="chain" id="PRO_0000289602" description="ADP/ATP translocase 2, N-terminally processed">
    <location>
        <begin position="2"/>
        <end position="298"/>
    </location>
</feature>
<feature type="topological domain" description="Mitochondrial intermembrane" evidence="10">
    <location>
        <begin position="1"/>
        <end position="7"/>
    </location>
</feature>
<feature type="transmembrane region" description="Helical; Name=1" evidence="3">
    <location>
        <begin position="8"/>
        <end position="37"/>
    </location>
</feature>
<feature type="topological domain" description="Mitochondrial matrix" evidence="10">
    <location>
        <begin position="38"/>
        <end position="74"/>
    </location>
</feature>
<feature type="transmembrane region" description="Helical; Name=2" evidence="3">
    <location>
        <begin position="75"/>
        <end position="99"/>
    </location>
</feature>
<feature type="topological domain" description="Mitochondrial intermembrane" evidence="10">
    <location>
        <begin position="100"/>
        <end position="109"/>
    </location>
</feature>
<feature type="transmembrane region" description="Helical; Name=3" evidence="3">
    <location>
        <begin position="110"/>
        <end position="130"/>
    </location>
</feature>
<feature type="topological domain" description="Mitochondrial matrix" evidence="10">
    <location>
        <begin position="131"/>
        <end position="178"/>
    </location>
</feature>
<feature type="transmembrane region" description="Helical; Name=4" evidence="3">
    <location>
        <begin position="179"/>
        <end position="199"/>
    </location>
</feature>
<feature type="topological domain" description="Mitochondrial intermembrane" evidence="10">
    <location>
        <begin position="200"/>
        <end position="210"/>
    </location>
</feature>
<feature type="transmembrane region" description="Helical; Name=5" evidence="3">
    <location>
        <begin position="211"/>
        <end position="231"/>
    </location>
</feature>
<feature type="topological domain" description="Mitochondrial matrix" evidence="10">
    <location>
        <begin position="232"/>
        <end position="273"/>
    </location>
</feature>
<feature type="transmembrane region" description="Helical; Name=6" evidence="3">
    <location>
        <begin position="274"/>
        <end position="291"/>
    </location>
</feature>
<feature type="topological domain" description="Mitochondrial intermembrane" evidence="10">
    <location>
        <begin position="292"/>
        <end position="298"/>
    </location>
</feature>
<feature type="repeat" description="Solcar 1">
    <location>
        <begin position="6"/>
        <end position="98"/>
    </location>
</feature>
<feature type="repeat" description="Solcar 2">
    <location>
        <begin position="111"/>
        <end position="201"/>
    </location>
</feature>
<feature type="repeat" description="Solcar 3">
    <location>
        <begin position="212"/>
        <end position="297"/>
    </location>
</feature>
<feature type="region of interest" description="Important for transport activity" evidence="5">
    <location>
        <begin position="235"/>
        <end position="240"/>
    </location>
</feature>
<feature type="short sequence motif" description="Nucleotide carrier signature motif" evidence="3">
    <location>
        <begin position="235"/>
        <end position="240"/>
    </location>
</feature>
<feature type="binding site" evidence="3">
    <location>
        <position position="80"/>
    </location>
    <ligand>
        <name>ADP</name>
        <dbReference type="ChEBI" id="CHEBI:456216"/>
    </ligand>
</feature>
<feature type="binding site" evidence="3">
    <location>
        <position position="92"/>
    </location>
    <ligand>
        <name>ADP</name>
        <dbReference type="ChEBI" id="CHEBI:456216"/>
    </ligand>
</feature>
<feature type="binding site" evidence="3">
    <location>
        <position position="235"/>
    </location>
    <ligand>
        <name>ADP</name>
        <dbReference type="ChEBI" id="CHEBI:456216"/>
    </ligand>
</feature>
<feature type="modified residue" description="N-acetylmethionine" evidence="4">
    <location>
        <position position="1"/>
    </location>
</feature>
<feature type="modified residue" description="N-acetylthreonine; in ADP/ATP translocase 2, N-terminally processed" evidence="4">
    <location>
        <position position="2"/>
    </location>
</feature>
<feature type="modified residue" description="Phosphoserine" evidence="7">
    <location>
        <position position="7"/>
    </location>
</feature>
<feature type="modified residue" description="N6-malonyllysine" evidence="1">
    <location>
        <position position="23"/>
    </location>
</feature>
<feature type="modified residue" description="N6-succinyllysine" evidence="6">
    <location>
        <position position="43"/>
    </location>
</feature>
<feature type="modified residue" description="N6,N6,N6-trimethyllysine; alternate" evidence="4">
    <location>
        <position position="52"/>
    </location>
</feature>
<feature type="modified residue" description="N6,N6-dimethyllysine; alternate" evidence="4">
    <location>
        <position position="52"/>
    </location>
</feature>
<feature type="modified residue" description="N6-methyllysine; alternate" evidence="4">
    <location>
        <position position="52"/>
    </location>
</feature>
<feature type="modified residue" description="N6-malonyllysine" evidence="1">
    <location>
        <position position="92"/>
    </location>
</feature>
<feature type="modified residue" description="N6-malonyllysine" evidence="1">
    <location>
        <position position="96"/>
    </location>
</feature>
<feature type="modified residue" description="N6-acetyllysine; alternate" evidence="4">
    <location>
        <position position="105"/>
    </location>
</feature>
<feature type="modified residue" description="N6-succinyllysine; alternate" evidence="6">
    <location>
        <position position="105"/>
    </location>
</feature>
<feature type="modified residue" description="N6-acetyllysine; alternate" evidence="6">
    <location>
        <position position="147"/>
    </location>
</feature>
<feature type="modified residue" description="N6-malonyllysine; alternate" evidence="1">
    <location>
        <position position="147"/>
    </location>
</feature>
<feature type="modified residue" description="N6-methyllysine; alternate" evidence="4">
    <location>
        <position position="147"/>
    </location>
</feature>
<feature type="modified residue" description="N6-succinyllysine; alternate" evidence="6">
    <location>
        <position position="147"/>
    </location>
</feature>
<feature type="modified residue" description="N6-acetyllysine; alternate" evidence="6">
    <location>
        <position position="155"/>
    </location>
</feature>
<feature type="modified residue" description="N6-succinyllysine; alternate" evidence="6">
    <location>
        <position position="155"/>
    </location>
</feature>
<feature type="modified residue" description="N6-acetyllysine" evidence="4">
    <location>
        <position position="163"/>
    </location>
</feature>
<feature type="modified residue" description="N6-acetyllysine" evidence="6">
    <location>
        <position position="166"/>
    </location>
</feature>
<feature type="modified residue" description="N6-acetyllysine; alternate" evidence="6">
    <location>
        <position position="268"/>
    </location>
</feature>
<feature type="modified residue" description="N6-succinyllysine; alternate" evidence="6">
    <location>
        <position position="268"/>
    </location>
</feature>
<reference key="1">
    <citation type="submission" date="2006-09" db="EMBL/GenBank/DDBJ databases">
        <title>Echidna ANT2.</title>
        <authorList>
            <person name="Wistow G."/>
        </authorList>
    </citation>
    <scope>NUCLEOTIDE SEQUENCE [MRNA]</scope>
</reference>
<comment type="function">
    <text evidence="2 4 6">ADP:ATP antiporter that mediates import of ADP into the mitochondrial matrix for ATP synthesis, and export of ATP out to fuel the cell (By similarity). Cycles between the cytoplasmic-open state (c-state) and the matrix-open state (m-state): operates by the alternating access mechanism with a single substrate-binding site intermittently exposed to either the cytosolic (c-state) or matrix (m-state) side of the inner mitochondrial membrane (By similarity). In addition to its ADP:ATP antiporter activity, also involved in mitochondrial uncoupling and mitochondrial permeability transition pore (mPTP) activity. Plays a role in mitochondrial uncoupling by acting as a proton transporter: proton transport uncouples the proton flows via the electron transport chain and ATP synthase to reduce the efficiency of ATP production and cause mitochondrial thermogenesis. Proton transporter activity is inhibited by ADP:ATP antiporter activity, suggesting that SLC25A5/ANT2 acts as a master regulator of mitochondrial energy output by maintaining a delicate balance between ATP production (ADP:ATP antiporter activity) and thermogenesis (proton transporter activity). Proton transporter activity requires free fatty acids as cofactor, but does not transport it. Probably mediates mitochondrial uncoupling in tissues that do not express UCP1. Also plays a key role in mPTP opening, a non-specific pore that enables free passage of the mitochondrial membranes to solutes of up to 1.5 kDa, and which contributes to cell death. It is however unclear if SLC25A5/ANT2 constitutes a pore-forming component of mPTP or regulates it (By similarity). Acts as a regulator of mitophagy independently of ADP:ATP antiporter activity: promotes mitophagy via interaction with TIMM44, leading to inhibit the presequence translocase TIMM23, thereby promoting stabilization of PINK1 (By similarity). As part of the mitotic spindle-associated MMXD complex it may play a role in chromosome segregation (By similarity).</text>
</comment>
<comment type="catalytic activity">
    <reaction evidence="6">
        <text>ADP(in) + ATP(out) = ADP(out) + ATP(in)</text>
        <dbReference type="Rhea" id="RHEA:34999"/>
        <dbReference type="ChEBI" id="CHEBI:30616"/>
        <dbReference type="ChEBI" id="CHEBI:456216"/>
    </reaction>
</comment>
<comment type="catalytic activity">
    <reaction evidence="6">
        <text>H(+)(in) = H(+)(out)</text>
        <dbReference type="Rhea" id="RHEA:34979"/>
        <dbReference type="ChEBI" id="CHEBI:15378"/>
    </reaction>
</comment>
<comment type="activity regulation">
    <text evidence="2 6">The matrix-open state (m-state) is inhibited by the membrane-permeable bongkrekic acid (BKA). The cytoplasmic-open state (c-state) is inhibited by the membrane-impermeable toxic inhibitor carboxyatractyloside (CATR) (By similarity). Proton transporter activity is inhibited by ADP:ATP antiporter activity (By similarity).</text>
</comment>
<comment type="subunit">
    <text evidence="2 3 4 6">Monomer (By similarity). Component of the MMXD complex, which includes CIAO1, ERCC2, CIAO2B, MMS19 and SLC25A5/ANT2. Interacts with AK4 (By similarity). Interacts with TIMM44; leading to inhibit the presequence translocase TIMM23, thereby promoting stabilization of PINK1 (By similarity).</text>
</comment>
<comment type="subcellular location">
    <subcellularLocation>
        <location evidence="3">Mitochondrion inner membrane</location>
        <topology evidence="8">Multi-pass membrane protein</topology>
    </subcellularLocation>
    <subcellularLocation>
        <location evidence="4">Membrane</location>
        <topology evidence="8">Multi-pass membrane protein</topology>
    </subcellularLocation>
    <text evidence="4">May localize to non-mitochondrial membranes.</text>
</comment>
<comment type="domain">
    <text evidence="3">The transmembrane helices are not perpendicular to the plane of the membrane, but cross the membrane at an angle. Odd-numbered transmembrane helices exhibit a sharp kink, due to the presence of a conserved proline residue.</text>
</comment>
<comment type="PTM">
    <text evidence="4">Trimethylated by ANTKMT at Lys-52.</text>
</comment>
<comment type="similarity">
    <text evidence="10">Belongs to the mitochondrial carrier (TC 2.A.29) family.</text>
</comment>
<sequence>MTDAAVSFAKDFLAGGVAAAISKTAVAPIERVKLLLQVQHASKQITADKQYKGIMDCVVRIPKEQGVLSFWRGNLANVIRYFPTQALNFAFKDKYKQIFLGGVDKRTQFWRYFAGNLASGGAAGATSLCFVYPLDFARTRLAADVGKAGDAREFKGLGDCLVKITKSDGIRGLYQGFNVSVQGIIIYRAAYFGIYDTAKGMLPDPKNTHIFISWMIAQSVTAVAGLTSYPFDTVRRRMMMQSGRKGSDIMYTGTIDCWKKIARDEGSKAFFKGAWSNVLRGMGGAFVLVLYDEIKKYT</sequence>